<gene>
    <name type="ORF">SPBP35G2.17</name>
</gene>
<feature type="chain" id="PRO_0000416656" description="Putative uncharacterized protein P35G2.17">
    <location>
        <begin position="1"/>
        <end position="106"/>
    </location>
</feature>
<dbReference type="EMBL" id="CU329671">
    <property type="protein sequence ID" value="CCD31357.1"/>
    <property type="molecule type" value="Genomic_DNA"/>
</dbReference>
<dbReference type="RefSeq" id="XP_004001703.1">
    <property type="nucleotide sequence ID" value="XM_004001654.1"/>
</dbReference>
<dbReference type="SMR" id="G2TRS6"/>
<dbReference type="PaxDb" id="4896-SPBP35G2.17.1"/>
<dbReference type="EnsemblFungi" id="SPBP35G2.17.1">
    <property type="protein sequence ID" value="SPBP35G2.17.1:pep"/>
    <property type="gene ID" value="SPBP35G2.17"/>
</dbReference>
<dbReference type="PomBase" id="SPBP35G2.17"/>
<dbReference type="VEuPathDB" id="FungiDB:SPBP35G2.17"/>
<dbReference type="HOGENOM" id="CLU_2224743_0_0_1"/>
<dbReference type="InParanoid" id="G2TRS6"/>
<dbReference type="PRO" id="PR:G2TRS6"/>
<dbReference type="Proteomes" id="UP000002485">
    <property type="component" value="Chromosome II"/>
</dbReference>
<proteinExistence type="predicted"/>
<keyword id="KW-1185">Reference proteome</keyword>
<name>YN8H_SCHPO</name>
<protein>
    <recommendedName>
        <fullName>Putative uncharacterized protein P35G2.17</fullName>
    </recommendedName>
</protein>
<sequence>MVREFYVTGRGRKLLPTVFRIKSFHGIVRQCVKQQRDFTSFLASSPAMGVAQGQQVKLILMLLIETWETKHQSCHSHFILLEFTHLFVRKFSQIFFEFRLFAHLLS</sequence>
<reference key="1">
    <citation type="journal article" date="2002" name="Nature">
        <title>The genome sequence of Schizosaccharomyces pombe.</title>
        <authorList>
            <person name="Wood V."/>
            <person name="Gwilliam R."/>
            <person name="Rajandream M.A."/>
            <person name="Lyne M.H."/>
            <person name="Lyne R."/>
            <person name="Stewart A."/>
            <person name="Sgouros J.G."/>
            <person name="Peat N."/>
            <person name="Hayles J."/>
            <person name="Baker S.G."/>
            <person name="Basham D."/>
            <person name="Bowman S."/>
            <person name="Brooks K."/>
            <person name="Brown D."/>
            <person name="Brown S."/>
            <person name="Chillingworth T."/>
            <person name="Churcher C.M."/>
            <person name="Collins M."/>
            <person name="Connor R."/>
            <person name="Cronin A."/>
            <person name="Davis P."/>
            <person name="Feltwell T."/>
            <person name="Fraser A."/>
            <person name="Gentles S."/>
            <person name="Goble A."/>
            <person name="Hamlin N."/>
            <person name="Harris D.E."/>
            <person name="Hidalgo J."/>
            <person name="Hodgson G."/>
            <person name="Holroyd S."/>
            <person name="Hornsby T."/>
            <person name="Howarth S."/>
            <person name="Huckle E.J."/>
            <person name="Hunt S."/>
            <person name="Jagels K."/>
            <person name="James K.D."/>
            <person name="Jones L."/>
            <person name="Jones M."/>
            <person name="Leather S."/>
            <person name="McDonald S."/>
            <person name="McLean J."/>
            <person name="Mooney P."/>
            <person name="Moule S."/>
            <person name="Mungall K.L."/>
            <person name="Murphy L.D."/>
            <person name="Niblett D."/>
            <person name="Odell C."/>
            <person name="Oliver K."/>
            <person name="O'Neil S."/>
            <person name="Pearson D."/>
            <person name="Quail M.A."/>
            <person name="Rabbinowitsch E."/>
            <person name="Rutherford K.M."/>
            <person name="Rutter S."/>
            <person name="Saunders D."/>
            <person name="Seeger K."/>
            <person name="Sharp S."/>
            <person name="Skelton J."/>
            <person name="Simmonds M.N."/>
            <person name="Squares R."/>
            <person name="Squares S."/>
            <person name="Stevens K."/>
            <person name="Taylor K."/>
            <person name="Taylor R.G."/>
            <person name="Tivey A."/>
            <person name="Walsh S.V."/>
            <person name="Warren T."/>
            <person name="Whitehead S."/>
            <person name="Woodward J.R."/>
            <person name="Volckaert G."/>
            <person name="Aert R."/>
            <person name="Robben J."/>
            <person name="Grymonprez B."/>
            <person name="Weltjens I."/>
            <person name="Vanstreels E."/>
            <person name="Rieger M."/>
            <person name="Schaefer M."/>
            <person name="Mueller-Auer S."/>
            <person name="Gabel C."/>
            <person name="Fuchs M."/>
            <person name="Duesterhoeft A."/>
            <person name="Fritzc C."/>
            <person name="Holzer E."/>
            <person name="Moestl D."/>
            <person name="Hilbert H."/>
            <person name="Borzym K."/>
            <person name="Langer I."/>
            <person name="Beck A."/>
            <person name="Lehrach H."/>
            <person name="Reinhardt R."/>
            <person name="Pohl T.M."/>
            <person name="Eger P."/>
            <person name="Zimmermann W."/>
            <person name="Wedler H."/>
            <person name="Wambutt R."/>
            <person name="Purnelle B."/>
            <person name="Goffeau A."/>
            <person name="Cadieu E."/>
            <person name="Dreano S."/>
            <person name="Gloux S."/>
            <person name="Lelaure V."/>
            <person name="Mottier S."/>
            <person name="Galibert F."/>
            <person name="Aves S.J."/>
            <person name="Xiang Z."/>
            <person name="Hunt C."/>
            <person name="Moore K."/>
            <person name="Hurst S.M."/>
            <person name="Lucas M."/>
            <person name="Rochet M."/>
            <person name="Gaillardin C."/>
            <person name="Tallada V.A."/>
            <person name="Garzon A."/>
            <person name="Thode G."/>
            <person name="Daga R.R."/>
            <person name="Cruzado L."/>
            <person name="Jimenez J."/>
            <person name="Sanchez M."/>
            <person name="del Rey F."/>
            <person name="Benito J."/>
            <person name="Dominguez A."/>
            <person name="Revuelta J.L."/>
            <person name="Moreno S."/>
            <person name="Armstrong J."/>
            <person name="Forsburg S.L."/>
            <person name="Cerutti L."/>
            <person name="Lowe T."/>
            <person name="McCombie W.R."/>
            <person name="Paulsen I."/>
            <person name="Potashkin J."/>
            <person name="Shpakovski G.V."/>
            <person name="Ussery D."/>
            <person name="Barrell B.G."/>
            <person name="Nurse P."/>
        </authorList>
    </citation>
    <scope>NUCLEOTIDE SEQUENCE [LARGE SCALE GENOMIC DNA]</scope>
    <source>
        <strain>972 / ATCC 24843</strain>
    </source>
</reference>
<reference key="2">
    <citation type="journal article" date="2011" name="Science">
        <title>Comparative functional genomics of the fission yeasts.</title>
        <authorList>
            <person name="Rhind N."/>
            <person name="Chen Z."/>
            <person name="Yassour M."/>
            <person name="Thompson D.A."/>
            <person name="Haas B.J."/>
            <person name="Habib N."/>
            <person name="Wapinski I."/>
            <person name="Roy S."/>
            <person name="Lin M.F."/>
            <person name="Heiman D.I."/>
            <person name="Young S.K."/>
            <person name="Furuya K."/>
            <person name="Guo Y."/>
            <person name="Pidoux A."/>
            <person name="Chen H.M."/>
            <person name="Robbertse B."/>
            <person name="Goldberg J.M."/>
            <person name="Aoki K."/>
            <person name="Bayne E.H."/>
            <person name="Berlin A.M."/>
            <person name="Desjardins C.A."/>
            <person name="Dobbs E."/>
            <person name="Dukaj L."/>
            <person name="Fan L."/>
            <person name="FitzGerald M.G."/>
            <person name="French C."/>
            <person name="Gujja S."/>
            <person name="Hansen K."/>
            <person name="Keifenheim D."/>
            <person name="Levin J.Z."/>
            <person name="Mosher R.A."/>
            <person name="Mueller C.A."/>
            <person name="Pfiffner J."/>
            <person name="Priest M."/>
            <person name="Russ C."/>
            <person name="Smialowska A."/>
            <person name="Swoboda P."/>
            <person name="Sykes S.M."/>
            <person name="Vaughn M."/>
            <person name="Vengrova S."/>
            <person name="Yoder R."/>
            <person name="Zeng Q."/>
            <person name="Allshire R."/>
            <person name="Baulcombe D."/>
            <person name="Birren B.W."/>
            <person name="Brown W."/>
            <person name="Ekwall K."/>
            <person name="Kellis M."/>
            <person name="Leatherwood J."/>
            <person name="Levin H."/>
            <person name="Margalit H."/>
            <person name="Martienssen R."/>
            <person name="Nieduszynski C.A."/>
            <person name="Spatafora J.W."/>
            <person name="Friedman N."/>
            <person name="Dalgaard J.Z."/>
            <person name="Baumann P."/>
            <person name="Niki H."/>
            <person name="Regev A."/>
            <person name="Nusbaum C."/>
        </authorList>
    </citation>
    <scope>IDENTIFICATION</scope>
</reference>
<accession>G2TRS6</accession>
<organism>
    <name type="scientific">Schizosaccharomyces pombe (strain 972 / ATCC 24843)</name>
    <name type="common">Fission yeast</name>
    <dbReference type="NCBI Taxonomy" id="284812"/>
    <lineage>
        <taxon>Eukaryota</taxon>
        <taxon>Fungi</taxon>
        <taxon>Dikarya</taxon>
        <taxon>Ascomycota</taxon>
        <taxon>Taphrinomycotina</taxon>
        <taxon>Schizosaccharomycetes</taxon>
        <taxon>Schizosaccharomycetales</taxon>
        <taxon>Schizosaccharomycetaceae</taxon>
        <taxon>Schizosaccharomyces</taxon>
    </lineage>
</organism>